<protein>
    <recommendedName>
        <fullName evidence="1">Large ribosomal subunit protein uL29</fullName>
    </recommendedName>
    <alternativeName>
        <fullName evidence="2">50S ribosomal protein L29</fullName>
    </alternativeName>
</protein>
<organism>
    <name type="scientific">Pseudoalteromonas translucida (strain TAC 125)</name>
    <dbReference type="NCBI Taxonomy" id="326442"/>
    <lineage>
        <taxon>Bacteria</taxon>
        <taxon>Pseudomonadati</taxon>
        <taxon>Pseudomonadota</taxon>
        <taxon>Gammaproteobacteria</taxon>
        <taxon>Alteromonadales</taxon>
        <taxon>Pseudoalteromonadaceae</taxon>
        <taxon>Pseudoalteromonas</taxon>
    </lineage>
</organism>
<name>RL29_PSET1</name>
<evidence type="ECO:0000255" key="1">
    <source>
        <dbReference type="HAMAP-Rule" id="MF_00374"/>
    </source>
</evidence>
<evidence type="ECO:0000305" key="2"/>
<sequence length="63" mass="7183">MKASELKDKSVEELNTELLGLLREQFNMRMQASTGQLAQTHTLRTVRRDIARVKTVINQKAGQ</sequence>
<accession>Q3IFM4</accession>
<gene>
    <name evidence="1" type="primary">rpmC</name>
    <name type="ordered locus">PSHAa0152</name>
</gene>
<feature type="chain" id="PRO_1000007565" description="Large ribosomal subunit protein uL29">
    <location>
        <begin position="1"/>
        <end position="63"/>
    </location>
</feature>
<comment type="similarity">
    <text evidence="1">Belongs to the universal ribosomal protein uL29 family.</text>
</comment>
<dbReference type="EMBL" id="CR954246">
    <property type="protein sequence ID" value="CAI85256.1"/>
    <property type="molecule type" value="Genomic_DNA"/>
</dbReference>
<dbReference type="SMR" id="Q3IFM4"/>
<dbReference type="STRING" id="326442.PSHAa0152"/>
<dbReference type="KEGG" id="pha:PSHAa0152"/>
<dbReference type="eggNOG" id="COG0255">
    <property type="taxonomic scope" value="Bacteria"/>
</dbReference>
<dbReference type="HOGENOM" id="CLU_158491_1_2_6"/>
<dbReference type="BioCyc" id="PHAL326442:PSHA_RS00775-MONOMER"/>
<dbReference type="Proteomes" id="UP000006843">
    <property type="component" value="Chromosome I"/>
</dbReference>
<dbReference type="GO" id="GO:0022625">
    <property type="term" value="C:cytosolic large ribosomal subunit"/>
    <property type="evidence" value="ECO:0007669"/>
    <property type="project" value="TreeGrafter"/>
</dbReference>
<dbReference type="GO" id="GO:0003735">
    <property type="term" value="F:structural constituent of ribosome"/>
    <property type="evidence" value="ECO:0007669"/>
    <property type="project" value="InterPro"/>
</dbReference>
<dbReference type="GO" id="GO:0006412">
    <property type="term" value="P:translation"/>
    <property type="evidence" value="ECO:0007669"/>
    <property type="project" value="UniProtKB-UniRule"/>
</dbReference>
<dbReference type="CDD" id="cd00427">
    <property type="entry name" value="Ribosomal_L29_HIP"/>
    <property type="match status" value="1"/>
</dbReference>
<dbReference type="FunFam" id="1.10.287.310:FF:000001">
    <property type="entry name" value="50S ribosomal protein L29"/>
    <property type="match status" value="1"/>
</dbReference>
<dbReference type="Gene3D" id="1.10.287.310">
    <property type="match status" value="1"/>
</dbReference>
<dbReference type="HAMAP" id="MF_00374">
    <property type="entry name" value="Ribosomal_uL29"/>
    <property type="match status" value="1"/>
</dbReference>
<dbReference type="InterPro" id="IPR050063">
    <property type="entry name" value="Ribosomal_protein_uL29"/>
</dbReference>
<dbReference type="InterPro" id="IPR001854">
    <property type="entry name" value="Ribosomal_uL29"/>
</dbReference>
<dbReference type="InterPro" id="IPR018254">
    <property type="entry name" value="Ribosomal_uL29_CS"/>
</dbReference>
<dbReference type="InterPro" id="IPR036049">
    <property type="entry name" value="Ribosomal_uL29_sf"/>
</dbReference>
<dbReference type="NCBIfam" id="TIGR00012">
    <property type="entry name" value="L29"/>
    <property type="match status" value="1"/>
</dbReference>
<dbReference type="PANTHER" id="PTHR10916">
    <property type="entry name" value="60S RIBOSOMAL PROTEIN L35/50S RIBOSOMAL PROTEIN L29"/>
    <property type="match status" value="1"/>
</dbReference>
<dbReference type="PANTHER" id="PTHR10916:SF0">
    <property type="entry name" value="LARGE RIBOSOMAL SUBUNIT PROTEIN UL29C"/>
    <property type="match status" value="1"/>
</dbReference>
<dbReference type="Pfam" id="PF00831">
    <property type="entry name" value="Ribosomal_L29"/>
    <property type="match status" value="1"/>
</dbReference>
<dbReference type="SUPFAM" id="SSF46561">
    <property type="entry name" value="Ribosomal protein L29 (L29p)"/>
    <property type="match status" value="1"/>
</dbReference>
<dbReference type="PROSITE" id="PS00579">
    <property type="entry name" value="RIBOSOMAL_L29"/>
    <property type="match status" value="1"/>
</dbReference>
<proteinExistence type="inferred from homology"/>
<reference key="1">
    <citation type="journal article" date="2005" name="Genome Res.">
        <title>Coping with cold: the genome of the versatile marine Antarctica bacterium Pseudoalteromonas haloplanktis TAC125.</title>
        <authorList>
            <person name="Medigue C."/>
            <person name="Krin E."/>
            <person name="Pascal G."/>
            <person name="Barbe V."/>
            <person name="Bernsel A."/>
            <person name="Bertin P.N."/>
            <person name="Cheung F."/>
            <person name="Cruveiller S."/>
            <person name="D'Amico S."/>
            <person name="Duilio A."/>
            <person name="Fang G."/>
            <person name="Feller G."/>
            <person name="Ho C."/>
            <person name="Mangenot S."/>
            <person name="Marino G."/>
            <person name="Nilsson J."/>
            <person name="Parrilli E."/>
            <person name="Rocha E.P.C."/>
            <person name="Rouy Z."/>
            <person name="Sekowska A."/>
            <person name="Tutino M.L."/>
            <person name="Vallenet D."/>
            <person name="von Heijne G."/>
            <person name="Danchin A."/>
        </authorList>
    </citation>
    <scope>NUCLEOTIDE SEQUENCE [LARGE SCALE GENOMIC DNA]</scope>
    <source>
        <strain>TAC 125</strain>
    </source>
</reference>
<keyword id="KW-1185">Reference proteome</keyword>
<keyword id="KW-0687">Ribonucleoprotein</keyword>
<keyword id="KW-0689">Ribosomal protein</keyword>